<proteinExistence type="inferred from homology"/>
<gene>
    <name evidence="1" type="primary">pyrB</name>
    <name type="ordered locus">A1S_1190</name>
</gene>
<feature type="chain" id="PRO_1000088730" description="Aspartate carbamoyltransferase catalytic subunit">
    <location>
        <begin position="1"/>
        <end position="338"/>
    </location>
</feature>
<feature type="binding site" evidence="1">
    <location>
        <position position="72"/>
    </location>
    <ligand>
        <name>carbamoyl phosphate</name>
        <dbReference type="ChEBI" id="CHEBI:58228"/>
    </ligand>
</feature>
<feature type="binding site" evidence="1">
    <location>
        <position position="73"/>
    </location>
    <ligand>
        <name>carbamoyl phosphate</name>
        <dbReference type="ChEBI" id="CHEBI:58228"/>
    </ligand>
</feature>
<feature type="binding site" evidence="1">
    <location>
        <position position="100"/>
    </location>
    <ligand>
        <name>L-aspartate</name>
        <dbReference type="ChEBI" id="CHEBI:29991"/>
    </ligand>
</feature>
<feature type="binding site" evidence="1">
    <location>
        <position position="122"/>
    </location>
    <ligand>
        <name>carbamoyl phosphate</name>
        <dbReference type="ChEBI" id="CHEBI:58228"/>
    </ligand>
</feature>
<feature type="binding site" evidence="1">
    <location>
        <position position="152"/>
    </location>
    <ligand>
        <name>carbamoyl phosphate</name>
        <dbReference type="ChEBI" id="CHEBI:58228"/>
    </ligand>
</feature>
<feature type="binding site" evidence="1">
    <location>
        <position position="155"/>
    </location>
    <ligand>
        <name>carbamoyl phosphate</name>
        <dbReference type="ChEBI" id="CHEBI:58228"/>
    </ligand>
</feature>
<feature type="binding site" evidence="1">
    <location>
        <position position="186"/>
    </location>
    <ligand>
        <name>L-aspartate</name>
        <dbReference type="ChEBI" id="CHEBI:29991"/>
    </ligand>
</feature>
<feature type="binding site" evidence="1">
    <location>
        <position position="243"/>
    </location>
    <ligand>
        <name>L-aspartate</name>
        <dbReference type="ChEBI" id="CHEBI:29991"/>
    </ligand>
</feature>
<feature type="binding site" evidence="1">
    <location>
        <position position="284"/>
    </location>
    <ligand>
        <name>carbamoyl phosphate</name>
        <dbReference type="ChEBI" id="CHEBI:58228"/>
    </ligand>
</feature>
<feature type="binding site" evidence="1">
    <location>
        <position position="285"/>
    </location>
    <ligand>
        <name>carbamoyl phosphate</name>
        <dbReference type="ChEBI" id="CHEBI:58228"/>
    </ligand>
</feature>
<protein>
    <recommendedName>
        <fullName evidence="1">Aspartate carbamoyltransferase catalytic subunit</fullName>
        <ecNumber evidence="1">2.1.3.2</ecNumber>
    </recommendedName>
    <alternativeName>
        <fullName evidence="1">Aspartate transcarbamylase</fullName>
        <shortName evidence="1">ATCase</shortName>
    </alternativeName>
</protein>
<evidence type="ECO:0000255" key="1">
    <source>
        <dbReference type="HAMAP-Rule" id="MF_00001"/>
    </source>
</evidence>
<accession>A3M3X6</accession>
<keyword id="KW-0665">Pyrimidine biosynthesis</keyword>
<keyword id="KW-0808">Transferase</keyword>
<sequence>MHIAALHQPSQVQLNQDGNLKHFLTIEGLSKENLTKILDTAQSFLDDNNNLINRPLLEGRTVMNLFFENSTRTRTTFEAAAKRLSANVLNIDIARSSTSKGETLRDTLWNLEAMAADIFVVRHSSSGAAHFIAKDVCPKVAIINAGDGRHAHPTQAMLDMLTIRRETKKPFEDLSVAIIGDIKHSRVARSDVAALQTLGCKDIRVIAPNTLLPVGFSEYGDHVRLFNNMDEGITGCDVIIALRIQNERIDSPALSSQSEFYRMYGLNKERLSLAKPDCIVMHPGPMNRGVEIDSSIADGEQSVILKQVTNGIAVRMAVLALSMQGQLQEQGLIEAIAL</sequence>
<name>PYRB_ACIBT</name>
<reference key="1">
    <citation type="journal article" date="2007" name="Genes Dev.">
        <title>New insights into Acinetobacter baumannii pathogenesis revealed by high-density pyrosequencing and transposon mutagenesis.</title>
        <authorList>
            <person name="Smith M.G."/>
            <person name="Gianoulis T.A."/>
            <person name="Pukatzki S."/>
            <person name="Mekalanos J.J."/>
            <person name="Ornston L.N."/>
            <person name="Gerstein M."/>
            <person name="Snyder M."/>
        </authorList>
    </citation>
    <scope>NUCLEOTIDE SEQUENCE [LARGE SCALE GENOMIC DNA]</scope>
    <source>
        <strain>ATCC 17978 / DSM 105126 / CIP 53.77 / LMG 1025 / NCDC KC755 / 5377</strain>
    </source>
</reference>
<organism>
    <name type="scientific">Acinetobacter baumannii (strain ATCC 17978 / DSM 105126 / CIP 53.77 / LMG 1025 / NCDC KC755 / 5377)</name>
    <dbReference type="NCBI Taxonomy" id="400667"/>
    <lineage>
        <taxon>Bacteria</taxon>
        <taxon>Pseudomonadati</taxon>
        <taxon>Pseudomonadota</taxon>
        <taxon>Gammaproteobacteria</taxon>
        <taxon>Moraxellales</taxon>
        <taxon>Moraxellaceae</taxon>
        <taxon>Acinetobacter</taxon>
        <taxon>Acinetobacter calcoaceticus/baumannii complex</taxon>
    </lineage>
</organism>
<dbReference type="EC" id="2.1.3.2" evidence="1"/>
<dbReference type="EMBL" id="CP000521">
    <property type="protein sequence ID" value="ABO11620.2"/>
    <property type="molecule type" value="Genomic_DNA"/>
</dbReference>
<dbReference type="RefSeq" id="WP_000546639.1">
    <property type="nucleotide sequence ID" value="NZ_CP053098.1"/>
</dbReference>
<dbReference type="SMR" id="A3M3X6"/>
<dbReference type="KEGG" id="acb:A1S_1190"/>
<dbReference type="HOGENOM" id="CLU_043846_2_0_6"/>
<dbReference type="UniPathway" id="UPA00070">
    <property type="reaction ID" value="UER00116"/>
</dbReference>
<dbReference type="GO" id="GO:0005829">
    <property type="term" value="C:cytosol"/>
    <property type="evidence" value="ECO:0007669"/>
    <property type="project" value="TreeGrafter"/>
</dbReference>
<dbReference type="GO" id="GO:0016597">
    <property type="term" value="F:amino acid binding"/>
    <property type="evidence" value="ECO:0007669"/>
    <property type="project" value="InterPro"/>
</dbReference>
<dbReference type="GO" id="GO:0004070">
    <property type="term" value="F:aspartate carbamoyltransferase activity"/>
    <property type="evidence" value="ECO:0007669"/>
    <property type="project" value="UniProtKB-UniRule"/>
</dbReference>
<dbReference type="GO" id="GO:0006207">
    <property type="term" value="P:'de novo' pyrimidine nucleobase biosynthetic process"/>
    <property type="evidence" value="ECO:0007669"/>
    <property type="project" value="InterPro"/>
</dbReference>
<dbReference type="GO" id="GO:0044205">
    <property type="term" value="P:'de novo' UMP biosynthetic process"/>
    <property type="evidence" value="ECO:0007669"/>
    <property type="project" value="UniProtKB-UniRule"/>
</dbReference>
<dbReference type="GO" id="GO:0006520">
    <property type="term" value="P:amino acid metabolic process"/>
    <property type="evidence" value="ECO:0007669"/>
    <property type="project" value="InterPro"/>
</dbReference>
<dbReference type="FunFam" id="3.40.50.1370:FF:000007">
    <property type="entry name" value="Aspartate carbamoyltransferase"/>
    <property type="match status" value="1"/>
</dbReference>
<dbReference type="Gene3D" id="3.40.50.1370">
    <property type="entry name" value="Aspartate/ornithine carbamoyltransferase"/>
    <property type="match status" value="2"/>
</dbReference>
<dbReference type="HAMAP" id="MF_00001">
    <property type="entry name" value="Asp_carb_tr"/>
    <property type="match status" value="1"/>
</dbReference>
<dbReference type="InterPro" id="IPR006132">
    <property type="entry name" value="Asp/Orn_carbamoyltranf_P-bd"/>
</dbReference>
<dbReference type="InterPro" id="IPR006130">
    <property type="entry name" value="Asp/Orn_carbamoylTrfase"/>
</dbReference>
<dbReference type="InterPro" id="IPR036901">
    <property type="entry name" value="Asp/Orn_carbamoylTrfase_sf"/>
</dbReference>
<dbReference type="InterPro" id="IPR002082">
    <property type="entry name" value="Asp_carbamoyltransf"/>
</dbReference>
<dbReference type="InterPro" id="IPR006131">
    <property type="entry name" value="Asp_carbamoyltransf_Asp/Orn-bd"/>
</dbReference>
<dbReference type="NCBIfam" id="TIGR00670">
    <property type="entry name" value="asp_carb_tr"/>
    <property type="match status" value="1"/>
</dbReference>
<dbReference type="NCBIfam" id="NF002032">
    <property type="entry name" value="PRK00856.1"/>
    <property type="match status" value="1"/>
</dbReference>
<dbReference type="PANTHER" id="PTHR45753:SF6">
    <property type="entry name" value="ASPARTATE CARBAMOYLTRANSFERASE"/>
    <property type="match status" value="1"/>
</dbReference>
<dbReference type="PANTHER" id="PTHR45753">
    <property type="entry name" value="ORNITHINE CARBAMOYLTRANSFERASE, MITOCHONDRIAL"/>
    <property type="match status" value="1"/>
</dbReference>
<dbReference type="Pfam" id="PF00185">
    <property type="entry name" value="OTCace"/>
    <property type="match status" value="1"/>
</dbReference>
<dbReference type="Pfam" id="PF02729">
    <property type="entry name" value="OTCace_N"/>
    <property type="match status" value="1"/>
</dbReference>
<dbReference type="PRINTS" id="PR00100">
    <property type="entry name" value="AOTCASE"/>
</dbReference>
<dbReference type="PRINTS" id="PR00101">
    <property type="entry name" value="ATCASE"/>
</dbReference>
<dbReference type="SUPFAM" id="SSF53671">
    <property type="entry name" value="Aspartate/ornithine carbamoyltransferase"/>
    <property type="match status" value="1"/>
</dbReference>
<dbReference type="PROSITE" id="PS00097">
    <property type="entry name" value="CARBAMOYLTRANSFERASE"/>
    <property type="match status" value="1"/>
</dbReference>
<comment type="function">
    <text evidence="1">Catalyzes the condensation of carbamoyl phosphate and aspartate to form carbamoyl aspartate and inorganic phosphate, the committed step in the de novo pyrimidine nucleotide biosynthesis pathway.</text>
</comment>
<comment type="catalytic activity">
    <reaction evidence="1">
        <text>carbamoyl phosphate + L-aspartate = N-carbamoyl-L-aspartate + phosphate + H(+)</text>
        <dbReference type="Rhea" id="RHEA:20013"/>
        <dbReference type="ChEBI" id="CHEBI:15378"/>
        <dbReference type="ChEBI" id="CHEBI:29991"/>
        <dbReference type="ChEBI" id="CHEBI:32814"/>
        <dbReference type="ChEBI" id="CHEBI:43474"/>
        <dbReference type="ChEBI" id="CHEBI:58228"/>
        <dbReference type="EC" id="2.1.3.2"/>
    </reaction>
</comment>
<comment type="pathway">
    <text evidence="1">Pyrimidine metabolism; UMP biosynthesis via de novo pathway; (S)-dihydroorotate from bicarbonate: step 2/3.</text>
</comment>
<comment type="subunit">
    <text evidence="1">Heterododecamer (2C3:3R2) of six catalytic PyrB chains organized as two trimers (C3), and six regulatory PyrI chains organized as three dimers (R2).</text>
</comment>
<comment type="similarity">
    <text evidence="1">Belongs to the aspartate/ornithine carbamoyltransferase superfamily. ATCase family.</text>
</comment>